<dbReference type="EMBL" id="AF166114">
    <property type="protein sequence ID" value="AAF43799.1"/>
    <property type="molecule type" value="Genomic_DNA"/>
</dbReference>
<dbReference type="RefSeq" id="NP_038358.1">
    <property type="nucleotide sequence ID" value="NC_002186.1"/>
</dbReference>
<dbReference type="SMR" id="Q9MUV2"/>
<dbReference type="GeneID" id="800923"/>
<dbReference type="GO" id="GO:0009535">
    <property type="term" value="C:chloroplast thylakoid membrane"/>
    <property type="evidence" value="ECO:0007669"/>
    <property type="project" value="UniProtKB-SubCell"/>
</dbReference>
<dbReference type="GO" id="GO:0045158">
    <property type="term" value="F:electron transporter, transferring electrons within cytochrome b6/f complex of photosystem II activity"/>
    <property type="evidence" value="ECO:0007669"/>
    <property type="project" value="UniProtKB-UniRule"/>
</dbReference>
<dbReference type="GO" id="GO:0045156">
    <property type="term" value="F:electron transporter, transferring electrons within the cyclic electron transport pathway of photosynthesis activity"/>
    <property type="evidence" value="ECO:0007669"/>
    <property type="project" value="InterPro"/>
</dbReference>
<dbReference type="GO" id="GO:0016491">
    <property type="term" value="F:oxidoreductase activity"/>
    <property type="evidence" value="ECO:0007669"/>
    <property type="project" value="InterPro"/>
</dbReference>
<dbReference type="GO" id="GO:0009767">
    <property type="term" value="P:photosynthetic electron transport chain"/>
    <property type="evidence" value="ECO:0007669"/>
    <property type="project" value="InterPro"/>
</dbReference>
<dbReference type="CDD" id="cd00290">
    <property type="entry name" value="cytochrome_b_C"/>
    <property type="match status" value="1"/>
</dbReference>
<dbReference type="FunFam" id="1.10.287.980:FF:000001">
    <property type="entry name" value="Cytochrome b6-f complex subunit 4"/>
    <property type="match status" value="1"/>
</dbReference>
<dbReference type="FunFam" id="1.20.5.510:FF:000002">
    <property type="entry name" value="Cytochrome b6-f complex subunit 4"/>
    <property type="match status" value="1"/>
</dbReference>
<dbReference type="Gene3D" id="1.10.287.980">
    <property type="entry name" value="plastocyanin oxidoreductase"/>
    <property type="match status" value="1"/>
</dbReference>
<dbReference type="Gene3D" id="1.20.5.510">
    <property type="entry name" value="Single helix bin"/>
    <property type="match status" value="1"/>
</dbReference>
<dbReference type="HAMAP" id="MF_01344">
    <property type="entry name" value="Cytb6_f_subIV"/>
    <property type="match status" value="1"/>
</dbReference>
<dbReference type="InterPro" id="IPR005798">
    <property type="entry name" value="Cyt_b/b6_C"/>
</dbReference>
<dbReference type="InterPro" id="IPR036150">
    <property type="entry name" value="Cyt_b/b6_C_sf"/>
</dbReference>
<dbReference type="InterPro" id="IPR005870">
    <property type="entry name" value="Cyt_b6/f_cplx_suIV"/>
</dbReference>
<dbReference type="InterPro" id="IPR048260">
    <property type="entry name" value="Cytochrome_b_C_euk/bac"/>
</dbReference>
<dbReference type="NCBIfam" id="TIGR01156">
    <property type="entry name" value="cytb6_f_IV"/>
    <property type="match status" value="1"/>
</dbReference>
<dbReference type="PANTHER" id="PTHR19271">
    <property type="entry name" value="CYTOCHROME B"/>
    <property type="match status" value="1"/>
</dbReference>
<dbReference type="PANTHER" id="PTHR19271:SF16">
    <property type="entry name" value="CYTOCHROME B"/>
    <property type="match status" value="1"/>
</dbReference>
<dbReference type="Pfam" id="PF00032">
    <property type="entry name" value="Cytochrom_B_C"/>
    <property type="match status" value="1"/>
</dbReference>
<dbReference type="PIRSF" id="PIRSF000033">
    <property type="entry name" value="B6f_17K"/>
    <property type="match status" value="1"/>
</dbReference>
<dbReference type="SUPFAM" id="SSF81648">
    <property type="entry name" value="a domain/subunit of cytochrome bc1 complex (Ubiquinol-cytochrome c reductase)"/>
    <property type="match status" value="1"/>
</dbReference>
<dbReference type="PROSITE" id="PS51003">
    <property type="entry name" value="CYTB_CTER"/>
    <property type="match status" value="1"/>
</dbReference>
<gene>
    <name evidence="2" type="primary">petD</name>
</gene>
<sequence length="160" mass="17546">MSLQKKPDLKDPVLRAKLAKGMGHNYYGEPAWPNDLLYTFPVCILGTIGCLVGLAVLEPTMFGEPANPFATPLEILPEWYFFPVFQILRVIPNKLLGVVLMAGVPAGLLTVPFIESINKFQNPFRRPVAMTVFLIGTVVAVWLGIGATLPIDTSLTLGFF</sequence>
<protein>
    <recommendedName>
        <fullName evidence="2">Cytochrome b6-f complex subunit 4</fullName>
    </recommendedName>
    <alternativeName>
        <fullName evidence="2">17 kDa polypeptide</fullName>
    </alternativeName>
</protein>
<accession>Q9MUV2</accession>
<evidence type="ECO:0000250" key="1"/>
<evidence type="ECO:0000255" key="2">
    <source>
        <dbReference type="HAMAP-Rule" id="MF_01344"/>
    </source>
</evidence>
<organism>
    <name type="scientific">Mesostigma viride</name>
    <name type="common">Green alga</name>
    <dbReference type="NCBI Taxonomy" id="41882"/>
    <lineage>
        <taxon>Eukaryota</taxon>
        <taxon>Viridiplantae</taxon>
        <taxon>Streptophyta</taxon>
        <taxon>Mesostigmatophyceae</taxon>
        <taxon>Mesostigmatales</taxon>
        <taxon>Mesostigmataceae</taxon>
        <taxon>Mesostigma</taxon>
    </lineage>
</organism>
<keyword id="KW-0150">Chloroplast</keyword>
<keyword id="KW-0249">Electron transport</keyword>
<keyword id="KW-0472">Membrane</keyword>
<keyword id="KW-0602">Photosynthesis</keyword>
<keyword id="KW-0934">Plastid</keyword>
<keyword id="KW-0793">Thylakoid</keyword>
<keyword id="KW-0812">Transmembrane</keyword>
<keyword id="KW-1133">Transmembrane helix</keyword>
<keyword id="KW-0813">Transport</keyword>
<geneLocation type="chloroplast"/>
<reference key="1">
    <citation type="journal article" date="2000" name="Nature">
        <title>Ancestral chloroplast genome in Mesostigma viride reveals an early branch of green plant evolution.</title>
        <authorList>
            <person name="Lemieux C."/>
            <person name="Otis C."/>
            <person name="Turmel M."/>
        </authorList>
    </citation>
    <scope>NUCLEOTIDE SEQUENCE [LARGE SCALE GENOMIC DNA]</scope>
    <source>
        <strain>NIES-296 / KY-14 / CCMP 2046</strain>
    </source>
</reference>
<comment type="function">
    <text evidence="2">Component of the cytochrome b6-f complex, which mediates electron transfer between photosystem II (PSII) and photosystem I (PSI), cyclic electron flow around PSI, and state transitions.</text>
</comment>
<comment type="subunit">
    <text evidence="1">The 4 large subunits of the cytochrome b6-f complex are cytochrome b6, subunit IV (17 kDa polypeptide, petD), cytochrome f and the Rieske protein, while the 4 small subunits are petG, petL, petM and petN. The complex functions as a dimer (By similarity).</text>
</comment>
<comment type="subcellular location">
    <subcellularLocation>
        <location evidence="2">Plastid</location>
        <location evidence="2">Chloroplast thylakoid membrane</location>
        <topology evidence="2">Multi-pass membrane protein</topology>
    </subcellularLocation>
</comment>
<comment type="similarity">
    <text evidence="2">Belongs to the cytochrome b family. PetD subfamily.</text>
</comment>
<name>PETD_MESVI</name>
<proteinExistence type="inferred from homology"/>
<feature type="chain" id="PRO_0000061869" description="Cytochrome b6-f complex subunit 4">
    <location>
        <begin position="1"/>
        <end position="160"/>
    </location>
</feature>
<feature type="transmembrane region" description="Helical" evidence="2">
    <location>
        <begin position="36"/>
        <end position="56"/>
    </location>
</feature>
<feature type="transmembrane region" description="Helical" evidence="2">
    <location>
        <begin position="95"/>
        <end position="115"/>
    </location>
</feature>
<feature type="transmembrane region" description="Helical" evidence="2">
    <location>
        <begin position="131"/>
        <end position="151"/>
    </location>
</feature>